<feature type="chain" id="PRO_0000162397" description="Uncharacterized isomerase PM1503">
    <location>
        <begin position="1"/>
        <end position="289"/>
    </location>
</feature>
<feature type="active site" evidence="1">
    <location>
        <position position="48"/>
    </location>
</feature>
<evidence type="ECO:0000250" key="1"/>
<evidence type="ECO:0000305" key="2"/>
<reference key="1">
    <citation type="journal article" date="2001" name="Proc. Natl. Acad. Sci. U.S.A.">
        <title>Complete genomic sequence of Pasteurella multocida Pm70.</title>
        <authorList>
            <person name="May B.J."/>
            <person name="Zhang Q."/>
            <person name="Li L.L."/>
            <person name="Paustian M.L."/>
            <person name="Whittam T.S."/>
            <person name="Kapur V."/>
        </authorList>
    </citation>
    <scope>NUCLEOTIDE SEQUENCE [LARGE SCALE GENOMIC DNA]</scope>
    <source>
        <strain>Pm70</strain>
    </source>
</reference>
<keyword id="KW-0413">Isomerase</keyword>
<keyword id="KW-1185">Reference proteome</keyword>
<protein>
    <recommendedName>
        <fullName>Uncharacterized isomerase PM1503</fullName>
        <ecNumber>5.1.-.-</ecNumber>
    </recommendedName>
</protein>
<dbReference type="EC" id="5.1.-.-"/>
<dbReference type="EMBL" id="AE004439">
    <property type="protein sequence ID" value="AAK03587.1"/>
    <property type="molecule type" value="Genomic_DNA"/>
</dbReference>
<dbReference type="RefSeq" id="WP_010907194.1">
    <property type="nucleotide sequence ID" value="NC_002663.1"/>
</dbReference>
<dbReference type="SMR" id="Q9CKV2"/>
<dbReference type="STRING" id="272843.PM1503"/>
<dbReference type="EnsemblBacteria" id="AAK03587">
    <property type="protein sequence ID" value="AAK03587"/>
    <property type="gene ID" value="PM1503"/>
</dbReference>
<dbReference type="KEGG" id="pmu:PM1503"/>
<dbReference type="PATRIC" id="fig|272843.6.peg.1519"/>
<dbReference type="HOGENOM" id="CLU_048756_0_1_6"/>
<dbReference type="OrthoDB" id="9788221at2"/>
<dbReference type="Proteomes" id="UP000000809">
    <property type="component" value="Chromosome"/>
</dbReference>
<dbReference type="GO" id="GO:0005737">
    <property type="term" value="C:cytoplasm"/>
    <property type="evidence" value="ECO:0007669"/>
    <property type="project" value="TreeGrafter"/>
</dbReference>
<dbReference type="GO" id="GO:0016853">
    <property type="term" value="F:isomerase activity"/>
    <property type="evidence" value="ECO:0007669"/>
    <property type="project" value="UniProtKB-KW"/>
</dbReference>
<dbReference type="GO" id="GO:0009058">
    <property type="term" value="P:biosynthetic process"/>
    <property type="evidence" value="ECO:0007669"/>
    <property type="project" value="InterPro"/>
</dbReference>
<dbReference type="Gene3D" id="3.10.310.10">
    <property type="entry name" value="Diaminopimelate Epimerase, Chain A, domain 1"/>
    <property type="match status" value="2"/>
</dbReference>
<dbReference type="InterPro" id="IPR003719">
    <property type="entry name" value="Phenazine_PhzF-like"/>
</dbReference>
<dbReference type="NCBIfam" id="TIGR00654">
    <property type="entry name" value="PhzF_family"/>
    <property type="match status" value="1"/>
</dbReference>
<dbReference type="PANTHER" id="PTHR13774:SF32">
    <property type="entry name" value="ANTISENSE-ENHANCING SEQUENCE 1"/>
    <property type="match status" value="1"/>
</dbReference>
<dbReference type="PANTHER" id="PTHR13774">
    <property type="entry name" value="PHENAZINE BIOSYNTHESIS PROTEIN"/>
    <property type="match status" value="1"/>
</dbReference>
<dbReference type="Pfam" id="PF02567">
    <property type="entry name" value="PhzC-PhzF"/>
    <property type="match status" value="1"/>
</dbReference>
<dbReference type="PIRSF" id="PIRSF016184">
    <property type="entry name" value="PhzC_PhzF"/>
    <property type="match status" value="1"/>
</dbReference>
<dbReference type="SUPFAM" id="SSF54506">
    <property type="entry name" value="Diaminopimelate epimerase-like"/>
    <property type="match status" value="1"/>
</dbReference>
<name>Y1503_PASMU</name>
<proteinExistence type="inferred from homology"/>
<organism>
    <name type="scientific">Pasteurella multocida (strain Pm70)</name>
    <dbReference type="NCBI Taxonomy" id="272843"/>
    <lineage>
        <taxon>Bacteria</taxon>
        <taxon>Pseudomonadati</taxon>
        <taxon>Pseudomonadota</taxon>
        <taxon>Gammaproteobacteria</taxon>
        <taxon>Pasteurellales</taxon>
        <taxon>Pasteurellaceae</taxon>
        <taxon>Pasteurella</taxon>
    </lineage>
</organism>
<accession>Q9CKV2</accession>
<comment type="similarity">
    <text evidence="2">Belongs to the PhzF family.</text>
</comment>
<gene>
    <name type="ordered locus">PM1503</name>
</gene>
<sequence length="289" mass="31906">MLTPYAYHLVNVFAETYFGGNPLAVFPQADGLTDQQMQLIARQFNLSETVFVHQTTESSAVRKLRIFTPDYELPFAGHPTIGAAFVLHQQLNLPETYLLQTQAGLVKLFHEAKQICFGLQNHIDVEVIDDNLPQYTQLLGLSESDIAQIAWINTGSRQLLIQLTSLNALKTCQIHPALFQQIVKQSALYLWFVEQNQANVRLFFGSNGAVVEDPGTGSAAANLGGLCLKNGLTPLNWRIYQGDEIQRPNRLTLQVDESETIYVGGKVIAVGCGELFVPSGEGEPSQGCR</sequence>